<proteinExistence type="inferred from homology"/>
<gene>
    <name evidence="1" type="primary">dapL</name>
    <name type="ordered locus">Helmi_09500</name>
    <name type="ORF">HM1_0993</name>
</gene>
<comment type="function">
    <text evidence="1">Involved in the synthesis of meso-diaminopimelate (m-DAP or DL-DAP), required for both lysine and peptidoglycan biosynthesis. Catalyzes the direct conversion of tetrahydrodipicolinate to LL-diaminopimelate.</text>
</comment>
<comment type="catalytic activity">
    <reaction evidence="1">
        <text>(2S,6S)-2,6-diaminopimelate + 2-oxoglutarate = (S)-2,3,4,5-tetrahydrodipicolinate + L-glutamate + H2O + H(+)</text>
        <dbReference type="Rhea" id="RHEA:23988"/>
        <dbReference type="ChEBI" id="CHEBI:15377"/>
        <dbReference type="ChEBI" id="CHEBI:15378"/>
        <dbReference type="ChEBI" id="CHEBI:16810"/>
        <dbReference type="ChEBI" id="CHEBI:16845"/>
        <dbReference type="ChEBI" id="CHEBI:29985"/>
        <dbReference type="ChEBI" id="CHEBI:57609"/>
        <dbReference type="EC" id="2.6.1.83"/>
    </reaction>
</comment>
<comment type="cofactor">
    <cofactor evidence="1">
        <name>pyridoxal 5'-phosphate</name>
        <dbReference type="ChEBI" id="CHEBI:597326"/>
    </cofactor>
</comment>
<comment type="pathway">
    <text evidence="1">Amino-acid biosynthesis; L-lysine biosynthesis via DAP pathway; LL-2,6-diaminopimelate from (S)-tetrahydrodipicolinate (aminotransferase route): step 1/1.</text>
</comment>
<comment type="subunit">
    <text evidence="1">Homodimer.</text>
</comment>
<comment type="similarity">
    <text evidence="1">Belongs to the class-I pyridoxal-phosphate-dependent aminotransferase family. LL-diaminopimelate aminotransferase subfamily.</text>
</comment>
<name>DAPAT_HELMI</name>
<keyword id="KW-0032">Aminotransferase</keyword>
<keyword id="KW-0663">Pyridoxal phosphate</keyword>
<keyword id="KW-1185">Reference proteome</keyword>
<keyword id="KW-0808">Transferase</keyword>
<sequence>MALVNENYLKLPGSYLFSEIARRVNQFKKANPEADIIRLGIGDVTRPLVPAVVEAMKKAVDEMGRAETFRGYGPEQGYDFLIGQIIENDYKPRGIDLGMDEVFVSDGSKCDTANFQEILGIGNIVAVTDPVYPVYVDSNVMAGRSGAFNEKGQFDDIVYLPCTEANGMKPELPKTRVDMIYLCFPNNPTGMTLTKEELKQWVDYARENKSIILYDAAYEAFIQEAHIPRSIYEIEGAREVAVEFRSFSKTAGFTGTRCAFTVVPKEVMAYDREGRAYSLNGLWLRRQTTKFNGVSYPVQAAAAAIYTEAGKKQVKETIEYYMENARIIREGLVEAGYKVFGGVNAPYIWLKTPDNMSSWDFFDKLISVANVVGTPGAGFGASGEGYFRLTAFGTRENTVKALERIRTRM</sequence>
<organism>
    <name type="scientific">Heliobacterium modesticaldum (strain ATCC 51547 / Ice1)</name>
    <dbReference type="NCBI Taxonomy" id="498761"/>
    <lineage>
        <taxon>Bacteria</taxon>
        <taxon>Bacillati</taxon>
        <taxon>Bacillota</taxon>
        <taxon>Clostridia</taxon>
        <taxon>Eubacteriales</taxon>
        <taxon>Heliobacteriaceae</taxon>
        <taxon>Heliomicrobium</taxon>
    </lineage>
</organism>
<protein>
    <recommendedName>
        <fullName evidence="1">LL-diaminopimelate aminotransferase</fullName>
        <shortName evidence="1">DAP-AT</shortName>
        <shortName evidence="1">DAP-aminotransferase</shortName>
        <shortName evidence="1">LL-DAP-aminotransferase</shortName>
        <ecNumber evidence="1">2.6.1.83</ecNumber>
    </recommendedName>
</protein>
<dbReference type="EC" id="2.6.1.83" evidence="1"/>
<dbReference type="EMBL" id="CP000930">
    <property type="protein sequence ID" value="ABZ83575.1"/>
    <property type="molecule type" value="Genomic_DNA"/>
</dbReference>
<dbReference type="RefSeq" id="WP_012282103.1">
    <property type="nucleotide sequence ID" value="NC_010337.2"/>
</dbReference>
<dbReference type="SMR" id="B0TA38"/>
<dbReference type="STRING" id="498761.HM1_0993"/>
<dbReference type="KEGG" id="hmo:HM1_0993"/>
<dbReference type="eggNOG" id="COG0436">
    <property type="taxonomic scope" value="Bacteria"/>
</dbReference>
<dbReference type="HOGENOM" id="CLU_051433_0_0_9"/>
<dbReference type="OrthoDB" id="9813612at2"/>
<dbReference type="UniPathway" id="UPA00034">
    <property type="reaction ID" value="UER00466"/>
</dbReference>
<dbReference type="Proteomes" id="UP000008550">
    <property type="component" value="Chromosome"/>
</dbReference>
<dbReference type="GO" id="GO:0010285">
    <property type="term" value="F:L,L-diaminopimelate aminotransferase activity"/>
    <property type="evidence" value="ECO:0007669"/>
    <property type="project" value="UniProtKB-UniRule"/>
</dbReference>
<dbReference type="GO" id="GO:0030170">
    <property type="term" value="F:pyridoxal phosphate binding"/>
    <property type="evidence" value="ECO:0007669"/>
    <property type="project" value="UniProtKB-UniRule"/>
</dbReference>
<dbReference type="GO" id="GO:0033362">
    <property type="term" value="P:lysine biosynthetic process via diaminopimelate, diaminopimelate-aminotransferase pathway"/>
    <property type="evidence" value="ECO:0007669"/>
    <property type="project" value="UniProtKB-UniRule"/>
</dbReference>
<dbReference type="CDD" id="cd00609">
    <property type="entry name" value="AAT_like"/>
    <property type="match status" value="1"/>
</dbReference>
<dbReference type="FunFam" id="3.40.640.10:FF:000099">
    <property type="entry name" value="LL-diaminopimelate aminotransferase, chloroplastic"/>
    <property type="match status" value="1"/>
</dbReference>
<dbReference type="Gene3D" id="3.90.1150.10">
    <property type="entry name" value="Aspartate Aminotransferase, domain 1"/>
    <property type="match status" value="1"/>
</dbReference>
<dbReference type="Gene3D" id="3.40.640.10">
    <property type="entry name" value="Type I PLP-dependent aspartate aminotransferase-like (Major domain)"/>
    <property type="match status" value="1"/>
</dbReference>
<dbReference type="HAMAP" id="MF_01642">
    <property type="entry name" value="DapL_aminotrans_1"/>
    <property type="match status" value="1"/>
</dbReference>
<dbReference type="InterPro" id="IPR004839">
    <property type="entry name" value="Aminotransferase_I/II_large"/>
</dbReference>
<dbReference type="InterPro" id="IPR019942">
    <property type="entry name" value="DapL/ALD1"/>
</dbReference>
<dbReference type="InterPro" id="IPR015424">
    <property type="entry name" value="PyrdxlP-dep_Trfase"/>
</dbReference>
<dbReference type="InterPro" id="IPR015421">
    <property type="entry name" value="PyrdxlP-dep_Trfase_major"/>
</dbReference>
<dbReference type="InterPro" id="IPR015422">
    <property type="entry name" value="PyrdxlP-dep_Trfase_small"/>
</dbReference>
<dbReference type="NCBIfam" id="TIGR03542">
    <property type="entry name" value="DAPAT_plant"/>
    <property type="match status" value="1"/>
</dbReference>
<dbReference type="PANTHER" id="PTHR43144">
    <property type="entry name" value="AMINOTRANSFERASE"/>
    <property type="match status" value="1"/>
</dbReference>
<dbReference type="Pfam" id="PF00155">
    <property type="entry name" value="Aminotran_1_2"/>
    <property type="match status" value="1"/>
</dbReference>
<dbReference type="SUPFAM" id="SSF53383">
    <property type="entry name" value="PLP-dependent transferases"/>
    <property type="match status" value="1"/>
</dbReference>
<reference key="1">
    <citation type="journal article" date="2008" name="J. Bacteriol.">
        <title>The genome of Heliobacterium modesticaldum, a phototrophic representative of the Firmicutes containing the simplest photosynthetic apparatus.</title>
        <authorList>
            <person name="Sattley W.M."/>
            <person name="Madigan M.T."/>
            <person name="Swingley W.D."/>
            <person name="Cheung P.C."/>
            <person name="Clocksin K.M."/>
            <person name="Conrad A.L."/>
            <person name="Dejesa L.C."/>
            <person name="Honchak B.M."/>
            <person name="Jung D.O."/>
            <person name="Karbach L.E."/>
            <person name="Kurdoglu A."/>
            <person name="Lahiri S."/>
            <person name="Mastrian S.D."/>
            <person name="Page L.E."/>
            <person name="Taylor H.L."/>
            <person name="Wang Z.T."/>
            <person name="Raymond J."/>
            <person name="Chen M."/>
            <person name="Blankenship R.E."/>
            <person name="Touchman J.W."/>
        </authorList>
    </citation>
    <scope>NUCLEOTIDE SEQUENCE [LARGE SCALE GENOMIC DNA]</scope>
    <source>
        <strain>ATCC 51547 / Ice1</strain>
    </source>
</reference>
<feature type="chain" id="PRO_0000342242" description="LL-diaminopimelate aminotransferase">
    <location>
        <begin position="1"/>
        <end position="409"/>
    </location>
</feature>
<feature type="binding site" evidence="1">
    <location>
        <position position="15"/>
    </location>
    <ligand>
        <name>substrate</name>
    </ligand>
</feature>
<feature type="binding site" evidence="1">
    <location>
        <position position="42"/>
    </location>
    <ligand>
        <name>substrate</name>
    </ligand>
</feature>
<feature type="binding site" evidence="1">
    <location>
        <position position="72"/>
    </location>
    <ligand>
        <name>pyridoxal 5'-phosphate</name>
        <dbReference type="ChEBI" id="CHEBI:597326"/>
    </ligand>
</feature>
<feature type="binding site" evidence="1">
    <location>
        <begin position="108"/>
        <end position="109"/>
    </location>
    <ligand>
        <name>pyridoxal 5'-phosphate</name>
        <dbReference type="ChEBI" id="CHEBI:597326"/>
    </ligand>
</feature>
<feature type="binding site" evidence="1">
    <location>
        <position position="109"/>
    </location>
    <ligand>
        <name>substrate</name>
    </ligand>
</feature>
<feature type="binding site" evidence="1">
    <location>
        <position position="132"/>
    </location>
    <ligand>
        <name>pyridoxal 5'-phosphate</name>
        <dbReference type="ChEBI" id="CHEBI:597326"/>
    </ligand>
</feature>
<feature type="binding site" evidence="1">
    <location>
        <position position="132"/>
    </location>
    <ligand>
        <name>substrate</name>
    </ligand>
</feature>
<feature type="binding site" evidence="1">
    <location>
        <position position="187"/>
    </location>
    <ligand>
        <name>pyridoxal 5'-phosphate</name>
        <dbReference type="ChEBI" id="CHEBI:597326"/>
    </ligand>
</feature>
<feature type="binding site" evidence="1">
    <location>
        <position position="187"/>
    </location>
    <ligand>
        <name>substrate</name>
    </ligand>
</feature>
<feature type="binding site" evidence="1">
    <location>
        <position position="218"/>
    </location>
    <ligand>
        <name>pyridoxal 5'-phosphate</name>
        <dbReference type="ChEBI" id="CHEBI:597326"/>
    </ligand>
</feature>
<feature type="binding site" evidence="1">
    <location>
        <begin position="246"/>
        <end position="248"/>
    </location>
    <ligand>
        <name>pyridoxal 5'-phosphate</name>
        <dbReference type="ChEBI" id="CHEBI:597326"/>
    </ligand>
</feature>
<feature type="binding site" evidence="1">
    <location>
        <position position="257"/>
    </location>
    <ligand>
        <name>pyridoxal 5'-phosphate</name>
        <dbReference type="ChEBI" id="CHEBI:597326"/>
    </ligand>
</feature>
<feature type="binding site" evidence="1">
    <location>
        <position position="292"/>
    </location>
    <ligand>
        <name>pyridoxal 5'-phosphate</name>
        <dbReference type="ChEBI" id="CHEBI:597326"/>
    </ligand>
</feature>
<feature type="binding site" evidence="1">
    <location>
        <position position="292"/>
    </location>
    <ligand>
        <name>substrate</name>
    </ligand>
</feature>
<feature type="binding site" evidence="1">
    <location>
        <position position="388"/>
    </location>
    <ligand>
        <name>substrate</name>
    </ligand>
</feature>
<feature type="modified residue" description="N6-(pyridoxal phosphate)lysine" evidence="1">
    <location>
        <position position="249"/>
    </location>
</feature>
<accession>B0TA38</accession>
<evidence type="ECO:0000255" key="1">
    <source>
        <dbReference type="HAMAP-Rule" id="MF_01642"/>
    </source>
</evidence>